<accession>B6J0K5</accession>
<organism>
    <name type="scientific">Coxiella burnetii (strain CbuG_Q212)</name>
    <name type="common">Coxiella burnetii (strain Q212)</name>
    <dbReference type="NCBI Taxonomy" id="434923"/>
    <lineage>
        <taxon>Bacteria</taxon>
        <taxon>Pseudomonadati</taxon>
        <taxon>Pseudomonadota</taxon>
        <taxon>Gammaproteobacteria</taxon>
        <taxon>Legionellales</taxon>
        <taxon>Coxiellaceae</taxon>
        <taxon>Coxiella</taxon>
    </lineage>
</organism>
<reference key="1">
    <citation type="journal article" date="2009" name="Infect. Immun.">
        <title>Comparative genomics reveal extensive transposon-mediated genomic plasticity and diversity among potential effector proteins within the genus Coxiella.</title>
        <authorList>
            <person name="Beare P.A."/>
            <person name="Unsworth N."/>
            <person name="Andoh M."/>
            <person name="Voth D.E."/>
            <person name="Omsland A."/>
            <person name="Gilk S.D."/>
            <person name="Williams K.P."/>
            <person name="Sobral B.W."/>
            <person name="Kupko J.J. III"/>
            <person name="Porcella S.F."/>
            <person name="Samuel J.E."/>
            <person name="Heinzen R.A."/>
        </authorList>
    </citation>
    <scope>NUCLEOTIDE SEQUENCE [LARGE SCALE GENOMIC DNA]</scope>
    <source>
        <strain>CbuG_Q212</strain>
    </source>
</reference>
<name>PNP_COXB2</name>
<protein>
    <recommendedName>
        <fullName evidence="1">Polyribonucleotide nucleotidyltransferase</fullName>
        <ecNumber evidence="1">2.7.7.8</ecNumber>
    </recommendedName>
    <alternativeName>
        <fullName evidence="1">Polynucleotide phosphorylase</fullName>
        <shortName evidence="1">PNPase</shortName>
    </alternativeName>
</protein>
<feature type="chain" id="PRO_1000147910" description="Polyribonucleotide nucleotidyltransferase">
    <location>
        <begin position="1"/>
        <end position="696"/>
    </location>
</feature>
<feature type="domain" description="KH" evidence="1">
    <location>
        <begin position="556"/>
        <end position="615"/>
    </location>
</feature>
<feature type="domain" description="S1 motif" evidence="1">
    <location>
        <begin position="625"/>
        <end position="693"/>
    </location>
</feature>
<feature type="binding site" evidence="1">
    <location>
        <position position="489"/>
    </location>
    <ligand>
        <name>Mg(2+)</name>
        <dbReference type="ChEBI" id="CHEBI:18420"/>
    </ligand>
</feature>
<feature type="binding site" evidence="1">
    <location>
        <position position="495"/>
    </location>
    <ligand>
        <name>Mg(2+)</name>
        <dbReference type="ChEBI" id="CHEBI:18420"/>
    </ligand>
</feature>
<proteinExistence type="inferred from homology"/>
<comment type="function">
    <text evidence="1">Involved in mRNA degradation. Catalyzes the phosphorolysis of single-stranded polyribonucleotides processively in the 3'- to 5'-direction.</text>
</comment>
<comment type="catalytic activity">
    <reaction evidence="1">
        <text>RNA(n+1) + phosphate = RNA(n) + a ribonucleoside 5'-diphosphate</text>
        <dbReference type="Rhea" id="RHEA:22096"/>
        <dbReference type="Rhea" id="RHEA-COMP:14527"/>
        <dbReference type="Rhea" id="RHEA-COMP:17342"/>
        <dbReference type="ChEBI" id="CHEBI:43474"/>
        <dbReference type="ChEBI" id="CHEBI:57930"/>
        <dbReference type="ChEBI" id="CHEBI:140395"/>
        <dbReference type="EC" id="2.7.7.8"/>
    </reaction>
</comment>
<comment type="cofactor">
    <cofactor evidence="1">
        <name>Mg(2+)</name>
        <dbReference type="ChEBI" id="CHEBI:18420"/>
    </cofactor>
</comment>
<comment type="subunit">
    <text evidence="1">Component of the RNA degradosome, which is a multiprotein complex involved in RNA processing and mRNA degradation.</text>
</comment>
<comment type="subcellular location">
    <subcellularLocation>
        <location evidence="1">Cytoplasm</location>
    </subcellularLocation>
</comment>
<comment type="similarity">
    <text evidence="1">Belongs to the polyribonucleotide nucleotidyltransferase family.</text>
</comment>
<keyword id="KW-0963">Cytoplasm</keyword>
<keyword id="KW-0460">Magnesium</keyword>
<keyword id="KW-0479">Metal-binding</keyword>
<keyword id="KW-0548">Nucleotidyltransferase</keyword>
<keyword id="KW-0694">RNA-binding</keyword>
<keyword id="KW-0808">Transferase</keyword>
<gene>
    <name evidence="1" type="primary">pnp</name>
    <name type="ordered locus">CbuG_1149</name>
</gene>
<evidence type="ECO:0000255" key="1">
    <source>
        <dbReference type="HAMAP-Rule" id="MF_01595"/>
    </source>
</evidence>
<dbReference type="EC" id="2.7.7.8" evidence="1"/>
<dbReference type="EMBL" id="CP001019">
    <property type="protein sequence ID" value="ACJ18483.1"/>
    <property type="molecule type" value="Genomic_DNA"/>
</dbReference>
<dbReference type="RefSeq" id="WP_012570115.1">
    <property type="nucleotide sequence ID" value="NC_011527.1"/>
</dbReference>
<dbReference type="SMR" id="B6J0K5"/>
<dbReference type="KEGG" id="cbg:CbuG_1149"/>
<dbReference type="HOGENOM" id="CLU_004217_2_2_6"/>
<dbReference type="GO" id="GO:0005829">
    <property type="term" value="C:cytosol"/>
    <property type="evidence" value="ECO:0007669"/>
    <property type="project" value="TreeGrafter"/>
</dbReference>
<dbReference type="GO" id="GO:0000175">
    <property type="term" value="F:3'-5'-RNA exonuclease activity"/>
    <property type="evidence" value="ECO:0007669"/>
    <property type="project" value="TreeGrafter"/>
</dbReference>
<dbReference type="GO" id="GO:0000287">
    <property type="term" value="F:magnesium ion binding"/>
    <property type="evidence" value="ECO:0007669"/>
    <property type="project" value="UniProtKB-UniRule"/>
</dbReference>
<dbReference type="GO" id="GO:0004654">
    <property type="term" value="F:polyribonucleotide nucleotidyltransferase activity"/>
    <property type="evidence" value="ECO:0007669"/>
    <property type="project" value="UniProtKB-UniRule"/>
</dbReference>
<dbReference type="GO" id="GO:0003723">
    <property type="term" value="F:RNA binding"/>
    <property type="evidence" value="ECO:0007669"/>
    <property type="project" value="UniProtKB-UniRule"/>
</dbReference>
<dbReference type="GO" id="GO:0006402">
    <property type="term" value="P:mRNA catabolic process"/>
    <property type="evidence" value="ECO:0007669"/>
    <property type="project" value="UniProtKB-UniRule"/>
</dbReference>
<dbReference type="GO" id="GO:0006396">
    <property type="term" value="P:RNA processing"/>
    <property type="evidence" value="ECO:0007669"/>
    <property type="project" value="InterPro"/>
</dbReference>
<dbReference type="CDD" id="cd02393">
    <property type="entry name" value="KH-I_PNPase"/>
    <property type="match status" value="1"/>
</dbReference>
<dbReference type="CDD" id="cd11363">
    <property type="entry name" value="RNase_PH_PNPase_1"/>
    <property type="match status" value="1"/>
</dbReference>
<dbReference type="CDD" id="cd11364">
    <property type="entry name" value="RNase_PH_PNPase_2"/>
    <property type="match status" value="1"/>
</dbReference>
<dbReference type="CDD" id="cd04472">
    <property type="entry name" value="S1_PNPase"/>
    <property type="match status" value="1"/>
</dbReference>
<dbReference type="FunFam" id="2.40.50.140:FF:000023">
    <property type="entry name" value="Polyribonucleotide nucleotidyltransferase"/>
    <property type="match status" value="1"/>
</dbReference>
<dbReference type="FunFam" id="3.30.1370.10:FF:000001">
    <property type="entry name" value="Polyribonucleotide nucleotidyltransferase"/>
    <property type="match status" value="1"/>
</dbReference>
<dbReference type="FunFam" id="3.30.230.70:FF:000001">
    <property type="entry name" value="Polyribonucleotide nucleotidyltransferase"/>
    <property type="match status" value="1"/>
</dbReference>
<dbReference type="FunFam" id="3.30.230.70:FF:000002">
    <property type="entry name" value="Polyribonucleotide nucleotidyltransferase"/>
    <property type="match status" value="1"/>
</dbReference>
<dbReference type="Gene3D" id="3.30.230.70">
    <property type="entry name" value="GHMP Kinase, N-terminal domain"/>
    <property type="match status" value="2"/>
</dbReference>
<dbReference type="Gene3D" id="3.30.1370.10">
    <property type="entry name" value="K Homology domain, type 1"/>
    <property type="match status" value="1"/>
</dbReference>
<dbReference type="Gene3D" id="2.40.50.140">
    <property type="entry name" value="Nucleic acid-binding proteins"/>
    <property type="match status" value="1"/>
</dbReference>
<dbReference type="HAMAP" id="MF_01595">
    <property type="entry name" value="PNPase"/>
    <property type="match status" value="1"/>
</dbReference>
<dbReference type="InterPro" id="IPR001247">
    <property type="entry name" value="ExoRNase_PH_dom1"/>
</dbReference>
<dbReference type="InterPro" id="IPR015847">
    <property type="entry name" value="ExoRNase_PH_dom2"/>
</dbReference>
<dbReference type="InterPro" id="IPR036345">
    <property type="entry name" value="ExoRNase_PH_dom2_sf"/>
</dbReference>
<dbReference type="InterPro" id="IPR004087">
    <property type="entry name" value="KH_dom"/>
</dbReference>
<dbReference type="InterPro" id="IPR004088">
    <property type="entry name" value="KH_dom_type_1"/>
</dbReference>
<dbReference type="InterPro" id="IPR036612">
    <property type="entry name" value="KH_dom_type_1_sf"/>
</dbReference>
<dbReference type="InterPro" id="IPR012340">
    <property type="entry name" value="NA-bd_OB-fold"/>
</dbReference>
<dbReference type="InterPro" id="IPR012162">
    <property type="entry name" value="PNPase"/>
</dbReference>
<dbReference type="InterPro" id="IPR027408">
    <property type="entry name" value="PNPase/RNase_PH_dom_sf"/>
</dbReference>
<dbReference type="InterPro" id="IPR015848">
    <property type="entry name" value="PNPase_PH_RNA-bd_bac/org-type"/>
</dbReference>
<dbReference type="InterPro" id="IPR036456">
    <property type="entry name" value="PNPase_PH_RNA-bd_sf"/>
</dbReference>
<dbReference type="InterPro" id="IPR020568">
    <property type="entry name" value="Ribosomal_Su5_D2-typ_SF"/>
</dbReference>
<dbReference type="InterPro" id="IPR003029">
    <property type="entry name" value="S1_domain"/>
</dbReference>
<dbReference type="NCBIfam" id="TIGR03591">
    <property type="entry name" value="polynuc_phos"/>
    <property type="match status" value="1"/>
</dbReference>
<dbReference type="NCBIfam" id="NF008805">
    <property type="entry name" value="PRK11824.1"/>
    <property type="match status" value="1"/>
</dbReference>
<dbReference type="PANTHER" id="PTHR11252">
    <property type="entry name" value="POLYRIBONUCLEOTIDE NUCLEOTIDYLTRANSFERASE"/>
    <property type="match status" value="1"/>
</dbReference>
<dbReference type="PANTHER" id="PTHR11252:SF0">
    <property type="entry name" value="POLYRIBONUCLEOTIDE NUCLEOTIDYLTRANSFERASE 1, MITOCHONDRIAL"/>
    <property type="match status" value="1"/>
</dbReference>
<dbReference type="Pfam" id="PF00013">
    <property type="entry name" value="KH_1"/>
    <property type="match status" value="1"/>
</dbReference>
<dbReference type="Pfam" id="PF03726">
    <property type="entry name" value="PNPase"/>
    <property type="match status" value="1"/>
</dbReference>
<dbReference type="Pfam" id="PF01138">
    <property type="entry name" value="RNase_PH"/>
    <property type="match status" value="2"/>
</dbReference>
<dbReference type="Pfam" id="PF03725">
    <property type="entry name" value="RNase_PH_C"/>
    <property type="match status" value="2"/>
</dbReference>
<dbReference type="Pfam" id="PF00575">
    <property type="entry name" value="S1"/>
    <property type="match status" value="1"/>
</dbReference>
<dbReference type="PIRSF" id="PIRSF005499">
    <property type="entry name" value="PNPase"/>
    <property type="match status" value="1"/>
</dbReference>
<dbReference type="SMART" id="SM00322">
    <property type="entry name" value="KH"/>
    <property type="match status" value="1"/>
</dbReference>
<dbReference type="SMART" id="SM00316">
    <property type="entry name" value="S1"/>
    <property type="match status" value="1"/>
</dbReference>
<dbReference type="SUPFAM" id="SSF54791">
    <property type="entry name" value="Eukaryotic type KH-domain (KH-domain type I)"/>
    <property type="match status" value="1"/>
</dbReference>
<dbReference type="SUPFAM" id="SSF50249">
    <property type="entry name" value="Nucleic acid-binding proteins"/>
    <property type="match status" value="1"/>
</dbReference>
<dbReference type="SUPFAM" id="SSF46915">
    <property type="entry name" value="Polynucleotide phosphorylase/guanosine pentaphosphate synthase (PNPase/GPSI), domain 3"/>
    <property type="match status" value="1"/>
</dbReference>
<dbReference type="SUPFAM" id="SSF55666">
    <property type="entry name" value="Ribonuclease PH domain 2-like"/>
    <property type="match status" value="2"/>
</dbReference>
<dbReference type="SUPFAM" id="SSF54211">
    <property type="entry name" value="Ribosomal protein S5 domain 2-like"/>
    <property type="match status" value="2"/>
</dbReference>
<dbReference type="PROSITE" id="PS50084">
    <property type="entry name" value="KH_TYPE_1"/>
    <property type="match status" value="1"/>
</dbReference>
<dbReference type="PROSITE" id="PS50126">
    <property type="entry name" value="S1"/>
    <property type="match status" value="1"/>
</dbReference>
<sequence length="696" mass="76331">MNKIRKTFQYGKHEVTFETGEMARQATGAVVVRMGDTVLLVSVVAKKEAEEGRDFFPLTINYQEKTYAAGKIPGGYFKREGRPTEKETLTSRLIDRPLRPLFPKGFTNEVQVIATVLSVDSKVPTDIPAILGASAAIGLSGIPFNGSLGAARVGYRGGEYLLNPSLDELKDSALDLVVAGTRDAVLMVESEAQELPESVMLGAVLHGHQAMQVAIQAIAEFIQEAGGAKWEWEPPTVNTALEKWVVEKSEAPLKKAYQIQEKTARQAQIQAIRDQLLADRAAEREGEENAVNEHELAVIFHELERRIVREQILTGQPRIDGRDSKTVRPITVKVGVLPRSHGSALFTRGETQALVVTTLGTERDAQSIDDLDGDRQEEFIFHYNFPPFCVGEVGFMSGPKRREIGHGRLAKRAVVPVVPTLDKFPYVIRVVSEILESNGSSSMASVCGSSLALMDAGVPTKAPVAGIAMGLIKENDKYAVLSDILGDEDHLGDMDFKVAGTSNGVTALQMDIKIEGITKEIMEQALDQAKEGRLHILSIMNKVLDKPRSQVSDLAPQYVTMKINPEKIRDVIGKGGVVIREITEATNCAIDISDDGTIKIAAHTTEEGEAAKRRIEELTAEVELGKVYEGTVVKITDFGAFVQILPNTQGLVHISQIAQERVENVRDYLEEGQVIRVKVIEIDRQGRVRLSMKQID</sequence>